<feature type="chain" id="PRO_0000284463" description="HTH-type transcriptional regulator SarZ">
    <location>
        <begin position="1"/>
        <end position="148"/>
    </location>
</feature>
<feature type="domain" description="HTH marR-type" evidence="2">
    <location>
        <begin position="9"/>
        <end position="139"/>
    </location>
</feature>
<feature type="DNA-binding region" description="H-T-H motif" evidence="2">
    <location>
        <begin position="55"/>
        <end position="78"/>
    </location>
</feature>
<evidence type="ECO:0000250" key="1"/>
<evidence type="ECO:0000255" key="2">
    <source>
        <dbReference type="PROSITE-ProRule" id="PRU00345"/>
    </source>
</evidence>
<evidence type="ECO:0000305" key="3"/>
<keyword id="KW-0963">Cytoplasm</keyword>
<keyword id="KW-0238">DNA-binding</keyword>
<keyword id="KW-0804">Transcription</keyword>
<keyword id="KW-0805">Transcription regulation</keyword>
<proteinExistence type="inferred from homology"/>
<dbReference type="EMBL" id="AE015929">
    <property type="protein sequence ID" value="AAO05608.1"/>
    <property type="molecule type" value="Genomic_DNA"/>
</dbReference>
<dbReference type="RefSeq" id="NP_765522.1">
    <property type="nucleotide sequence ID" value="NC_004461.1"/>
</dbReference>
<dbReference type="RefSeq" id="WP_002438330.1">
    <property type="nucleotide sequence ID" value="NZ_WBME01000017.1"/>
</dbReference>
<dbReference type="SMR" id="Q8CN77"/>
<dbReference type="KEGG" id="sep:SE_1967"/>
<dbReference type="PATRIC" id="fig|176280.10.peg.1920"/>
<dbReference type="eggNOG" id="COG1846">
    <property type="taxonomic scope" value="Bacteria"/>
</dbReference>
<dbReference type="HOGENOM" id="CLU_083287_3_2_9"/>
<dbReference type="OrthoDB" id="9806864at2"/>
<dbReference type="Proteomes" id="UP000001411">
    <property type="component" value="Chromosome"/>
</dbReference>
<dbReference type="GO" id="GO:0005737">
    <property type="term" value="C:cytoplasm"/>
    <property type="evidence" value="ECO:0007669"/>
    <property type="project" value="UniProtKB-SubCell"/>
</dbReference>
<dbReference type="GO" id="GO:0003677">
    <property type="term" value="F:DNA binding"/>
    <property type="evidence" value="ECO:0007669"/>
    <property type="project" value="UniProtKB-KW"/>
</dbReference>
<dbReference type="GO" id="GO:0003700">
    <property type="term" value="F:DNA-binding transcription factor activity"/>
    <property type="evidence" value="ECO:0007669"/>
    <property type="project" value="InterPro"/>
</dbReference>
<dbReference type="FunFam" id="1.10.10.10:FF:000163">
    <property type="entry name" value="MarR family transcriptional regulator"/>
    <property type="match status" value="1"/>
</dbReference>
<dbReference type="Gene3D" id="1.10.10.10">
    <property type="entry name" value="Winged helix-like DNA-binding domain superfamily/Winged helix DNA-binding domain"/>
    <property type="match status" value="1"/>
</dbReference>
<dbReference type="InterPro" id="IPR000835">
    <property type="entry name" value="HTH_MarR-typ"/>
</dbReference>
<dbReference type="InterPro" id="IPR055166">
    <property type="entry name" value="Transc_reg_Sar_Rot_HTH"/>
</dbReference>
<dbReference type="InterPro" id="IPR036388">
    <property type="entry name" value="WH-like_DNA-bd_sf"/>
</dbReference>
<dbReference type="InterPro" id="IPR036390">
    <property type="entry name" value="WH_DNA-bd_sf"/>
</dbReference>
<dbReference type="PANTHER" id="PTHR42756">
    <property type="entry name" value="TRANSCRIPTIONAL REGULATOR, MARR"/>
    <property type="match status" value="1"/>
</dbReference>
<dbReference type="PANTHER" id="PTHR42756:SF1">
    <property type="entry name" value="TRANSCRIPTIONAL REPRESSOR OF EMRAB OPERON"/>
    <property type="match status" value="1"/>
</dbReference>
<dbReference type="Pfam" id="PF22381">
    <property type="entry name" value="Staph_reg_Sar_Rot"/>
    <property type="match status" value="1"/>
</dbReference>
<dbReference type="PRINTS" id="PR00598">
    <property type="entry name" value="HTHMARR"/>
</dbReference>
<dbReference type="SMART" id="SM00347">
    <property type="entry name" value="HTH_MARR"/>
    <property type="match status" value="1"/>
</dbReference>
<dbReference type="SUPFAM" id="SSF46785">
    <property type="entry name" value="Winged helix' DNA-binding domain"/>
    <property type="match status" value="1"/>
</dbReference>
<dbReference type="PROSITE" id="PS50995">
    <property type="entry name" value="HTH_MARR_2"/>
    <property type="match status" value="1"/>
</dbReference>
<reference key="1">
    <citation type="journal article" date="2003" name="Mol. Microbiol.">
        <title>Genome-based analysis of virulence genes in a non-biofilm-forming Staphylococcus epidermidis strain (ATCC 12228).</title>
        <authorList>
            <person name="Zhang Y.-Q."/>
            <person name="Ren S.-X."/>
            <person name="Li H.-L."/>
            <person name="Wang Y.-X."/>
            <person name="Fu G."/>
            <person name="Yang J."/>
            <person name="Qin Z.-Q."/>
            <person name="Miao Y.-G."/>
            <person name="Wang W.-Y."/>
            <person name="Chen R.-S."/>
            <person name="Shen Y."/>
            <person name="Chen Z."/>
            <person name="Yuan Z.-H."/>
            <person name="Zhao G.-P."/>
            <person name="Qu D."/>
            <person name="Danchin A."/>
            <person name="Wen Y.-M."/>
        </authorList>
    </citation>
    <scope>NUCLEOTIDE SEQUENCE [LARGE SCALE GENOMIC DNA]</scope>
    <source>
        <strain>ATCC 12228 / FDA PCI 1200</strain>
    </source>
</reference>
<accession>Q8CN77</accession>
<name>SARZ_STAES</name>
<organism>
    <name type="scientific">Staphylococcus epidermidis (strain ATCC 12228 / FDA PCI 1200)</name>
    <dbReference type="NCBI Taxonomy" id="176280"/>
    <lineage>
        <taxon>Bacteria</taxon>
        <taxon>Bacillati</taxon>
        <taxon>Bacillota</taxon>
        <taxon>Bacilli</taxon>
        <taxon>Bacillales</taxon>
        <taxon>Staphylococcaceae</taxon>
        <taxon>Staphylococcus</taxon>
    </lineage>
</organism>
<comment type="subcellular location">
    <subcellularLocation>
        <location evidence="1">Cytoplasm</location>
    </subcellularLocation>
</comment>
<comment type="similarity">
    <text evidence="3">Belongs to the SarZ family.</text>
</comment>
<gene>
    <name type="primary">sarZ</name>
    <name type="ordered locus">SE_1967</name>
</gene>
<protein>
    <recommendedName>
        <fullName>HTH-type transcriptional regulator SarZ</fullName>
    </recommendedName>
    <alternativeName>
        <fullName>Staphylococcal accessory regulator Z</fullName>
    </alternativeName>
</protein>
<sequence>MYVENSYLSKQLCFLFYVSSKEIIKKYTDYLKEYGLTYTGYIVLMAIEDDEKLNIKKLGERVFLDSGTLTPLLKKLEKKNYVIRTREEQDERNLQISLTERGKDIQNVLSDISQSVFNEFNITQEETQNLVEDLQNFVTKNFDKTVEK</sequence>